<name>NHAA2_PELPD</name>
<protein>
    <recommendedName>
        <fullName evidence="1">Na(+)/H(+) antiporter NhaA 2</fullName>
    </recommendedName>
    <alternativeName>
        <fullName evidence="1">Sodium/proton antiporter NhaA 2</fullName>
    </alternativeName>
</protein>
<gene>
    <name evidence="1" type="primary">nhaA2</name>
    <name type="ordered locus">Ppro_2987</name>
</gene>
<comment type="function">
    <text evidence="1">Na(+)/H(+) antiporter that extrudes sodium in exchange for external protons.</text>
</comment>
<comment type="catalytic activity">
    <reaction evidence="1">
        <text>Na(+)(in) + 2 H(+)(out) = Na(+)(out) + 2 H(+)(in)</text>
        <dbReference type="Rhea" id="RHEA:29251"/>
        <dbReference type="ChEBI" id="CHEBI:15378"/>
        <dbReference type="ChEBI" id="CHEBI:29101"/>
    </reaction>
    <physiologicalReaction direction="left-to-right" evidence="1">
        <dbReference type="Rhea" id="RHEA:29252"/>
    </physiologicalReaction>
</comment>
<comment type="subcellular location">
    <subcellularLocation>
        <location evidence="1">Cell inner membrane</location>
        <topology evidence="1">Multi-pass membrane protein</topology>
    </subcellularLocation>
</comment>
<comment type="similarity">
    <text evidence="1">Belongs to the NhaA Na(+)/H(+) (TC 2.A.33) antiporter family.</text>
</comment>
<evidence type="ECO:0000255" key="1">
    <source>
        <dbReference type="HAMAP-Rule" id="MF_01844"/>
    </source>
</evidence>
<feature type="chain" id="PRO_0000334360" description="Na(+)/H(+) antiporter NhaA 2">
    <location>
        <begin position="1"/>
        <end position="382"/>
    </location>
</feature>
<feature type="transmembrane region" description="Helical" evidence="1">
    <location>
        <begin position="11"/>
        <end position="31"/>
    </location>
</feature>
<feature type="transmembrane region" description="Helical" evidence="1">
    <location>
        <begin position="45"/>
        <end position="65"/>
    </location>
</feature>
<feature type="transmembrane region" description="Helical" evidence="1">
    <location>
        <begin position="91"/>
        <end position="111"/>
    </location>
</feature>
<feature type="transmembrane region" description="Helical" evidence="1">
    <location>
        <begin position="116"/>
        <end position="136"/>
    </location>
</feature>
<feature type="transmembrane region" description="Helical" evidence="1">
    <location>
        <begin position="145"/>
        <end position="165"/>
    </location>
</feature>
<feature type="transmembrane region" description="Helical" evidence="1">
    <location>
        <begin position="171"/>
        <end position="191"/>
    </location>
</feature>
<feature type="transmembrane region" description="Helical" evidence="1">
    <location>
        <begin position="197"/>
        <end position="214"/>
    </location>
</feature>
<feature type="transmembrane region" description="Helical" evidence="1">
    <location>
        <begin position="287"/>
        <end position="307"/>
    </location>
</feature>
<feature type="transmembrane region" description="Helical" evidence="1">
    <location>
        <begin position="324"/>
        <end position="344"/>
    </location>
</feature>
<feature type="transmembrane region" description="Helical" evidence="1">
    <location>
        <begin position="353"/>
        <end position="373"/>
    </location>
</feature>
<sequence length="382" mass="41337">MKKHLNLLREFSVPLVAGVVVALFWANLDPAGYRAFDSTPFWGSLSFHFISNELFMTLFFGIAAVEITQSCMPGGDLNPISRAVNPLFGTLGGVLGPVLVYLGLNALVGLPELRNGWGIPTATDIALAWLAARMVFGPGHPAVSYLLLLAVADDAIGLAIIALFYPDPNHPVVAAWLLLTLLGMLVAWGLGRRRVRSYWPYILLGGSLSWIGLHQAHLHPALALVFIIPFLPHRLRESRHLFDDDPGDRSPLAQFEHEWKVVVDFGLFLFGLANAGVEFSSIGTVTWLVLVSLLVGKTVGIFGFGLLAERLGFRRPRGMKRRDLLVAGVVAGTGFTVALFVSGSAFSDPVIQAAAKMGAMFSLAAALIGMLLGQLLRIRKVH</sequence>
<keyword id="KW-0050">Antiport</keyword>
<keyword id="KW-0997">Cell inner membrane</keyword>
<keyword id="KW-1003">Cell membrane</keyword>
<keyword id="KW-0406">Ion transport</keyword>
<keyword id="KW-0472">Membrane</keyword>
<keyword id="KW-1185">Reference proteome</keyword>
<keyword id="KW-0915">Sodium</keyword>
<keyword id="KW-0739">Sodium transport</keyword>
<keyword id="KW-0812">Transmembrane</keyword>
<keyword id="KW-1133">Transmembrane helix</keyword>
<keyword id="KW-0813">Transport</keyword>
<dbReference type="EMBL" id="CP000482">
    <property type="protein sequence ID" value="ABL00585.1"/>
    <property type="molecule type" value="Genomic_DNA"/>
</dbReference>
<dbReference type="RefSeq" id="WP_011736820.1">
    <property type="nucleotide sequence ID" value="NC_008609.1"/>
</dbReference>
<dbReference type="SMR" id="A1ATB4"/>
<dbReference type="STRING" id="338966.Ppro_2987"/>
<dbReference type="KEGG" id="ppd:Ppro_2987"/>
<dbReference type="eggNOG" id="COG3004">
    <property type="taxonomic scope" value="Bacteria"/>
</dbReference>
<dbReference type="HOGENOM" id="CLU_015803_1_2_7"/>
<dbReference type="OrthoDB" id="9808135at2"/>
<dbReference type="Proteomes" id="UP000006732">
    <property type="component" value="Chromosome"/>
</dbReference>
<dbReference type="GO" id="GO:0005886">
    <property type="term" value="C:plasma membrane"/>
    <property type="evidence" value="ECO:0007669"/>
    <property type="project" value="UniProtKB-SubCell"/>
</dbReference>
<dbReference type="GO" id="GO:0015385">
    <property type="term" value="F:sodium:proton antiporter activity"/>
    <property type="evidence" value="ECO:0007669"/>
    <property type="project" value="TreeGrafter"/>
</dbReference>
<dbReference type="GO" id="GO:0006885">
    <property type="term" value="P:regulation of pH"/>
    <property type="evidence" value="ECO:0007669"/>
    <property type="project" value="InterPro"/>
</dbReference>
<dbReference type="Gene3D" id="1.20.1530.10">
    <property type="entry name" value="Na+/H+ antiporter like domain"/>
    <property type="match status" value="1"/>
</dbReference>
<dbReference type="HAMAP" id="MF_01844">
    <property type="entry name" value="NhaA"/>
    <property type="match status" value="1"/>
</dbReference>
<dbReference type="InterPro" id="IPR023171">
    <property type="entry name" value="Na/H_antiporter_dom_sf"/>
</dbReference>
<dbReference type="InterPro" id="IPR004670">
    <property type="entry name" value="NhaA"/>
</dbReference>
<dbReference type="PANTHER" id="PTHR30341:SF0">
    <property type="entry name" value="NA(+)_H(+) ANTIPORTER NHAA"/>
    <property type="match status" value="1"/>
</dbReference>
<dbReference type="PANTHER" id="PTHR30341">
    <property type="entry name" value="SODIUM ION/PROTON ANTIPORTER NHAA-RELATED"/>
    <property type="match status" value="1"/>
</dbReference>
<dbReference type="Pfam" id="PF06965">
    <property type="entry name" value="Na_H_antiport_1"/>
    <property type="match status" value="1"/>
</dbReference>
<organism>
    <name type="scientific">Pelobacter propionicus (strain DSM 2379 / NBRC 103807 / OttBd1)</name>
    <dbReference type="NCBI Taxonomy" id="338966"/>
    <lineage>
        <taxon>Bacteria</taxon>
        <taxon>Pseudomonadati</taxon>
        <taxon>Thermodesulfobacteriota</taxon>
        <taxon>Desulfuromonadia</taxon>
        <taxon>Desulfuromonadales</taxon>
        <taxon>Desulfuromonadaceae</taxon>
        <taxon>Pelobacter</taxon>
    </lineage>
</organism>
<reference key="1">
    <citation type="submission" date="2006-10" db="EMBL/GenBank/DDBJ databases">
        <title>Complete sequence of chromosome of Pelobacter propionicus DSM 2379.</title>
        <authorList>
            <consortium name="US DOE Joint Genome Institute"/>
            <person name="Copeland A."/>
            <person name="Lucas S."/>
            <person name="Lapidus A."/>
            <person name="Barry K."/>
            <person name="Detter J.C."/>
            <person name="Glavina del Rio T."/>
            <person name="Hammon N."/>
            <person name="Israni S."/>
            <person name="Dalin E."/>
            <person name="Tice H."/>
            <person name="Pitluck S."/>
            <person name="Saunders E."/>
            <person name="Brettin T."/>
            <person name="Bruce D."/>
            <person name="Han C."/>
            <person name="Tapia R."/>
            <person name="Schmutz J."/>
            <person name="Larimer F."/>
            <person name="Land M."/>
            <person name="Hauser L."/>
            <person name="Kyrpides N."/>
            <person name="Kim E."/>
            <person name="Lovley D."/>
            <person name="Richardson P."/>
        </authorList>
    </citation>
    <scope>NUCLEOTIDE SEQUENCE [LARGE SCALE GENOMIC DNA]</scope>
    <source>
        <strain>DSM 2379 / NBRC 103807 / OttBd1</strain>
    </source>
</reference>
<proteinExistence type="inferred from homology"/>
<accession>A1ATB4</accession>